<protein>
    <recommendedName>
        <fullName>Glycerate kinase</fullName>
        <ecNumber>2.7.1.31</ecNumber>
    </recommendedName>
</protein>
<feature type="chain" id="PRO_0000071533" description="Glycerate kinase">
    <location>
        <begin position="1"/>
        <end position="378"/>
    </location>
</feature>
<dbReference type="EC" id="2.7.1.31"/>
<dbReference type="EMBL" id="L42023">
    <property type="protein sequence ID" value="AAC21769.1"/>
    <property type="molecule type" value="Genomic_DNA"/>
</dbReference>
<dbReference type="PIR" id="C64142">
    <property type="entry name" value="C64142"/>
</dbReference>
<dbReference type="RefSeq" id="NP_438264.1">
    <property type="nucleotide sequence ID" value="NC_000907.1"/>
</dbReference>
<dbReference type="SMR" id="P44507"/>
<dbReference type="STRING" id="71421.HI_0091"/>
<dbReference type="EnsemblBacteria" id="AAC21769">
    <property type="protein sequence ID" value="AAC21769"/>
    <property type="gene ID" value="HI_0091"/>
</dbReference>
<dbReference type="KEGG" id="hin:HI_0091"/>
<dbReference type="PATRIC" id="fig|71421.8.peg.92"/>
<dbReference type="eggNOG" id="COG1929">
    <property type="taxonomic scope" value="Bacteria"/>
</dbReference>
<dbReference type="HOGENOM" id="CLU_028255_0_0_6"/>
<dbReference type="OrthoDB" id="9774290at2"/>
<dbReference type="PhylomeDB" id="P44507"/>
<dbReference type="BioCyc" id="HINF71421:G1GJ1-96-MONOMER"/>
<dbReference type="Proteomes" id="UP000000579">
    <property type="component" value="Chromosome"/>
</dbReference>
<dbReference type="GO" id="GO:0005524">
    <property type="term" value="F:ATP binding"/>
    <property type="evidence" value="ECO:0007669"/>
    <property type="project" value="UniProtKB-KW"/>
</dbReference>
<dbReference type="GO" id="GO:0043798">
    <property type="term" value="F:glycerate 2-kinase activity"/>
    <property type="evidence" value="ECO:0000318"/>
    <property type="project" value="GO_Central"/>
</dbReference>
<dbReference type="GO" id="GO:0008887">
    <property type="term" value="F:glycerate kinase activity"/>
    <property type="evidence" value="ECO:0007669"/>
    <property type="project" value="UniProtKB-EC"/>
</dbReference>
<dbReference type="GO" id="GO:0031388">
    <property type="term" value="P:organic acid phosphorylation"/>
    <property type="evidence" value="ECO:0007669"/>
    <property type="project" value="InterPro"/>
</dbReference>
<dbReference type="Gene3D" id="3.40.50.10350">
    <property type="entry name" value="Glycerate kinase, domain 1"/>
    <property type="match status" value="1"/>
</dbReference>
<dbReference type="Gene3D" id="3.90.1510.10">
    <property type="entry name" value="Glycerate kinase, domain 2"/>
    <property type="match status" value="1"/>
</dbReference>
<dbReference type="InterPro" id="IPR018193">
    <property type="entry name" value="Glyc_kinase_flavodox-like_fold"/>
</dbReference>
<dbReference type="InterPro" id="IPR004381">
    <property type="entry name" value="Glycerate_kinase"/>
</dbReference>
<dbReference type="InterPro" id="IPR018197">
    <property type="entry name" value="Glycerate_kinase_RE-like"/>
</dbReference>
<dbReference type="InterPro" id="IPR036129">
    <property type="entry name" value="Glycerate_kinase_sf"/>
</dbReference>
<dbReference type="NCBIfam" id="TIGR00045">
    <property type="entry name" value="glycerate kinase"/>
    <property type="match status" value="1"/>
</dbReference>
<dbReference type="PANTHER" id="PTHR21599">
    <property type="entry name" value="GLYCERATE KINASE"/>
    <property type="match status" value="1"/>
</dbReference>
<dbReference type="PANTHER" id="PTHR21599:SF0">
    <property type="entry name" value="GLYCERATE KINASE"/>
    <property type="match status" value="1"/>
</dbReference>
<dbReference type="Pfam" id="PF02595">
    <property type="entry name" value="Gly_kinase"/>
    <property type="match status" value="1"/>
</dbReference>
<dbReference type="PIRSF" id="PIRSF006078">
    <property type="entry name" value="GlxK"/>
    <property type="match status" value="1"/>
</dbReference>
<dbReference type="SUPFAM" id="SSF110738">
    <property type="entry name" value="Glycerate kinase I"/>
    <property type="match status" value="1"/>
</dbReference>
<accession>P44507</accession>
<evidence type="ECO:0000305" key="1"/>
<sequence>MKFVIAPDSFKESLTALEVATAIETGFKRVFPDADYVKLPMADGGEGTVQSLVDATQGKLIECEVTAPLGDKVKSFFGLSGDGKTAIIEMAAASGLHLVPPEKRNPLLTTSYGTGELIKLALDLGVESFILGIGGSATNDGGVGMLQALGMQCLDSQDKPIGFGGAELANIVKIDVQQLDPRLQQVHIEVACDVNNPLCGECGASAIFGPQKGATPEMVKQLDAALSHFAEIAERDCGKQIRDQAGAGAAGGMGGGLLLLPSVQLKAGIQIVLDRLHLIDYVKDADVVITGEGRIDAQSIMGKTPIGVARTAKQFNKPVIAIAGCLREDYDVVFDHGIDAVFPIIHQLGDLSDILKQGEQNLISTAQNVARVLAFKFH</sequence>
<proteinExistence type="inferred from homology"/>
<organism>
    <name type="scientific">Haemophilus influenzae (strain ATCC 51907 / DSM 11121 / KW20 / Rd)</name>
    <dbReference type="NCBI Taxonomy" id="71421"/>
    <lineage>
        <taxon>Bacteria</taxon>
        <taxon>Pseudomonadati</taxon>
        <taxon>Pseudomonadota</taxon>
        <taxon>Gammaproteobacteria</taxon>
        <taxon>Pasteurellales</taxon>
        <taxon>Pasteurellaceae</taxon>
        <taxon>Haemophilus</taxon>
    </lineage>
</organism>
<keyword id="KW-0067">ATP-binding</keyword>
<keyword id="KW-0418">Kinase</keyword>
<keyword id="KW-0547">Nucleotide-binding</keyword>
<keyword id="KW-1185">Reference proteome</keyword>
<keyword id="KW-0808">Transferase</keyword>
<name>GLXK_HAEIN</name>
<comment type="catalytic activity">
    <reaction>
        <text>(R)-glycerate + ATP = (2R)-3-phosphoglycerate + ADP + H(+)</text>
        <dbReference type="Rhea" id="RHEA:23516"/>
        <dbReference type="ChEBI" id="CHEBI:15378"/>
        <dbReference type="ChEBI" id="CHEBI:16659"/>
        <dbReference type="ChEBI" id="CHEBI:30616"/>
        <dbReference type="ChEBI" id="CHEBI:58272"/>
        <dbReference type="ChEBI" id="CHEBI:456216"/>
        <dbReference type="EC" id="2.7.1.31"/>
    </reaction>
</comment>
<comment type="similarity">
    <text evidence="1">Belongs to the glycerate kinase type-1 family.</text>
</comment>
<reference key="1">
    <citation type="journal article" date="1995" name="Science">
        <title>Whole-genome random sequencing and assembly of Haemophilus influenzae Rd.</title>
        <authorList>
            <person name="Fleischmann R.D."/>
            <person name="Adams M.D."/>
            <person name="White O."/>
            <person name="Clayton R.A."/>
            <person name="Kirkness E.F."/>
            <person name="Kerlavage A.R."/>
            <person name="Bult C.J."/>
            <person name="Tomb J.-F."/>
            <person name="Dougherty B.A."/>
            <person name="Merrick J.M."/>
            <person name="McKenney K."/>
            <person name="Sutton G.G."/>
            <person name="FitzHugh W."/>
            <person name="Fields C.A."/>
            <person name="Gocayne J.D."/>
            <person name="Scott J.D."/>
            <person name="Shirley R."/>
            <person name="Liu L.-I."/>
            <person name="Glodek A."/>
            <person name="Kelley J.M."/>
            <person name="Weidman J.F."/>
            <person name="Phillips C.A."/>
            <person name="Spriggs T."/>
            <person name="Hedblom E."/>
            <person name="Cotton M.D."/>
            <person name="Utterback T.R."/>
            <person name="Hanna M.C."/>
            <person name="Nguyen D.T."/>
            <person name="Saudek D.M."/>
            <person name="Brandon R.C."/>
            <person name="Fine L.D."/>
            <person name="Fritchman J.L."/>
            <person name="Fuhrmann J.L."/>
            <person name="Geoghagen N.S.M."/>
            <person name="Gnehm C.L."/>
            <person name="McDonald L.A."/>
            <person name="Small K.V."/>
            <person name="Fraser C.M."/>
            <person name="Smith H.O."/>
            <person name="Venter J.C."/>
        </authorList>
    </citation>
    <scope>NUCLEOTIDE SEQUENCE [LARGE SCALE GENOMIC DNA]</scope>
    <source>
        <strain>ATCC 51907 / DSM 11121 / KW20 / Rd</strain>
    </source>
</reference>
<gene>
    <name type="primary">glxK</name>
    <name type="ordered locus">HI_0091</name>
</gene>